<gene>
    <name evidence="1" type="primary">rapA</name>
    <name type="ordered locus">EC55989_0057</name>
</gene>
<organism>
    <name type="scientific">Escherichia coli (strain 55989 / EAEC)</name>
    <dbReference type="NCBI Taxonomy" id="585055"/>
    <lineage>
        <taxon>Bacteria</taxon>
        <taxon>Pseudomonadati</taxon>
        <taxon>Pseudomonadota</taxon>
        <taxon>Gammaproteobacteria</taxon>
        <taxon>Enterobacterales</taxon>
        <taxon>Enterobacteriaceae</taxon>
        <taxon>Escherichia</taxon>
    </lineage>
</organism>
<accession>B7L4I0</accession>
<name>RAPA_ECO55</name>
<protein>
    <recommendedName>
        <fullName evidence="1">RNA polymerase-associated protein RapA</fullName>
        <ecNumber evidence="1">3.6.4.-</ecNumber>
    </recommendedName>
    <alternativeName>
        <fullName evidence="1">ATP-dependent helicase HepA</fullName>
    </alternativeName>
</protein>
<keyword id="KW-0010">Activator</keyword>
<keyword id="KW-0067">ATP-binding</keyword>
<keyword id="KW-0238">DNA-binding</keyword>
<keyword id="KW-0347">Helicase</keyword>
<keyword id="KW-0378">Hydrolase</keyword>
<keyword id="KW-0547">Nucleotide-binding</keyword>
<keyword id="KW-1185">Reference proteome</keyword>
<keyword id="KW-0804">Transcription</keyword>
<keyword id="KW-0805">Transcription regulation</keyword>
<feature type="chain" id="PRO_1000188170" description="RNA polymerase-associated protein RapA">
    <location>
        <begin position="1"/>
        <end position="968"/>
    </location>
</feature>
<feature type="domain" description="Helicase ATP-binding" evidence="1">
    <location>
        <begin position="164"/>
        <end position="334"/>
    </location>
</feature>
<feature type="domain" description="Helicase C-terminal" evidence="1">
    <location>
        <begin position="490"/>
        <end position="662"/>
    </location>
</feature>
<feature type="short sequence motif" description="DEAH box">
    <location>
        <begin position="280"/>
        <end position="283"/>
    </location>
</feature>
<feature type="binding site" evidence="1">
    <location>
        <begin position="177"/>
        <end position="184"/>
    </location>
    <ligand>
        <name>ATP</name>
        <dbReference type="ChEBI" id="CHEBI:30616"/>
    </ligand>
</feature>
<reference key="1">
    <citation type="journal article" date="2009" name="PLoS Genet.">
        <title>Organised genome dynamics in the Escherichia coli species results in highly diverse adaptive paths.</title>
        <authorList>
            <person name="Touchon M."/>
            <person name="Hoede C."/>
            <person name="Tenaillon O."/>
            <person name="Barbe V."/>
            <person name="Baeriswyl S."/>
            <person name="Bidet P."/>
            <person name="Bingen E."/>
            <person name="Bonacorsi S."/>
            <person name="Bouchier C."/>
            <person name="Bouvet O."/>
            <person name="Calteau A."/>
            <person name="Chiapello H."/>
            <person name="Clermont O."/>
            <person name="Cruveiller S."/>
            <person name="Danchin A."/>
            <person name="Diard M."/>
            <person name="Dossat C."/>
            <person name="Karoui M.E."/>
            <person name="Frapy E."/>
            <person name="Garry L."/>
            <person name="Ghigo J.M."/>
            <person name="Gilles A.M."/>
            <person name="Johnson J."/>
            <person name="Le Bouguenec C."/>
            <person name="Lescat M."/>
            <person name="Mangenot S."/>
            <person name="Martinez-Jehanne V."/>
            <person name="Matic I."/>
            <person name="Nassif X."/>
            <person name="Oztas S."/>
            <person name="Petit M.A."/>
            <person name="Pichon C."/>
            <person name="Rouy Z."/>
            <person name="Ruf C.S."/>
            <person name="Schneider D."/>
            <person name="Tourret J."/>
            <person name="Vacherie B."/>
            <person name="Vallenet D."/>
            <person name="Medigue C."/>
            <person name="Rocha E.P.C."/>
            <person name="Denamur E."/>
        </authorList>
    </citation>
    <scope>NUCLEOTIDE SEQUENCE [LARGE SCALE GENOMIC DNA]</scope>
    <source>
        <strain>55989 / EAEC</strain>
    </source>
</reference>
<proteinExistence type="inferred from homology"/>
<dbReference type="EC" id="3.6.4.-" evidence="1"/>
<dbReference type="EMBL" id="CU928145">
    <property type="protein sequence ID" value="CAU95944.1"/>
    <property type="molecule type" value="Genomic_DNA"/>
</dbReference>
<dbReference type="RefSeq" id="WP_001117011.1">
    <property type="nucleotide sequence ID" value="NC_011748.1"/>
</dbReference>
<dbReference type="SMR" id="B7L4I0"/>
<dbReference type="GeneID" id="75202125"/>
<dbReference type="KEGG" id="eck:EC55989_0057"/>
<dbReference type="HOGENOM" id="CLU_011520_0_0_6"/>
<dbReference type="Proteomes" id="UP000000746">
    <property type="component" value="Chromosome"/>
</dbReference>
<dbReference type="GO" id="GO:0005524">
    <property type="term" value="F:ATP binding"/>
    <property type="evidence" value="ECO:0007669"/>
    <property type="project" value="UniProtKB-UniRule"/>
</dbReference>
<dbReference type="GO" id="GO:0003677">
    <property type="term" value="F:DNA binding"/>
    <property type="evidence" value="ECO:0007669"/>
    <property type="project" value="UniProtKB-KW"/>
</dbReference>
<dbReference type="GO" id="GO:0004386">
    <property type="term" value="F:helicase activity"/>
    <property type="evidence" value="ECO:0007669"/>
    <property type="project" value="UniProtKB-UniRule"/>
</dbReference>
<dbReference type="GO" id="GO:0016817">
    <property type="term" value="F:hydrolase activity, acting on acid anhydrides"/>
    <property type="evidence" value="ECO:0007669"/>
    <property type="project" value="InterPro"/>
</dbReference>
<dbReference type="GO" id="GO:0006355">
    <property type="term" value="P:regulation of DNA-templated transcription"/>
    <property type="evidence" value="ECO:0007669"/>
    <property type="project" value="UniProtKB-UniRule"/>
</dbReference>
<dbReference type="CDD" id="cd18011">
    <property type="entry name" value="DEXDc_RapA"/>
    <property type="match status" value="1"/>
</dbReference>
<dbReference type="CDD" id="cd18793">
    <property type="entry name" value="SF2_C_SNF"/>
    <property type="match status" value="1"/>
</dbReference>
<dbReference type="FunFam" id="2.30.30.140:FF:000020">
    <property type="entry name" value="RNA polymerase-associated protein RapA"/>
    <property type="match status" value="1"/>
</dbReference>
<dbReference type="FunFam" id="2.30.30.930:FF:000001">
    <property type="entry name" value="RNA polymerase-associated protein RapA"/>
    <property type="match status" value="1"/>
</dbReference>
<dbReference type="FunFam" id="3.30.360.80:FF:000001">
    <property type="entry name" value="RNA polymerase-associated protein RapA"/>
    <property type="match status" value="1"/>
</dbReference>
<dbReference type="FunFam" id="3.40.50.10810:FF:000012">
    <property type="entry name" value="RNA polymerase-associated protein RapA"/>
    <property type="match status" value="1"/>
</dbReference>
<dbReference type="FunFam" id="3.40.50.300:FF:000350">
    <property type="entry name" value="RNA polymerase-associated protein RapA"/>
    <property type="match status" value="1"/>
</dbReference>
<dbReference type="Gene3D" id="2.30.30.140">
    <property type="match status" value="1"/>
</dbReference>
<dbReference type="Gene3D" id="2.30.30.930">
    <property type="match status" value="1"/>
</dbReference>
<dbReference type="Gene3D" id="3.30.360.80">
    <property type="match status" value="1"/>
</dbReference>
<dbReference type="Gene3D" id="6.10.140.1500">
    <property type="match status" value="1"/>
</dbReference>
<dbReference type="Gene3D" id="6.10.140.2230">
    <property type="match status" value="1"/>
</dbReference>
<dbReference type="Gene3D" id="3.40.50.300">
    <property type="entry name" value="P-loop containing nucleotide triphosphate hydrolases"/>
    <property type="match status" value="1"/>
</dbReference>
<dbReference type="Gene3D" id="3.40.50.10810">
    <property type="entry name" value="Tandem AAA-ATPase domain"/>
    <property type="match status" value="1"/>
</dbReference>
<dbReference type="HAMAP" id="MF_01821">
    <property type="entry name" value="Helicase_RapA"/>
    <property type="match status" value="1"/>
</dbReference>
<dbReference type="InterPro" id="IPR014001">
    <property type="entry name" value="Helicase_ATP-bd"/>
</dbReference>
<dbReference type="InterPro" id="IPR001650">
    <property type="entry name" value="Helicase_C-like"/>
</dbReference>
<dbReference type="InterPro" id="IPR023949">
    <property type="entry name" value="Helicase_RapA"/>
</dbReference>
<dbReference type="InterPro" id="IPR027417">
    <property type="entry name" value="P-loop_NTPase"/>
</dbReference>
<dbReference type="InterPro" id="IPR022737">
    <property type="entry name" value="RapA_C"/>
</dbReference>
<dbReference type="InterPro" id="IPR038718">
    <property type="entry name" value="SNF2-like_sf"/>
</dbReference>
<dbReference type="InterPro" id="IPR049730">
    <property type="entry name" value="SNF2/RAD54-like_C"/>
</dbReference>
<dbReference type="InterPro" id="IPR000330">
    <property type="entry name" value="SNF2_N"/>
</dbReference>
<dbReference type="InterPro" id="IPR040765">
    <property type="entry name" value="Tudor_1_RapA"/>
</dbReference>
<dbReference type="InterPro" id="IPR040766">
    <property type="entry name" value="Tudor_2_RapA"/>
</dbReference>
<dbReference type="NCBIfam" id="NF003426">
    <property type="entry name" value="PRK04914.1"/>
    <property type="match status" value="1"/>
</dbReference>
<dbReference type="PANTHER" id="PTHR45766">
    <property type="entry name" value="DNA ANNEALING HELICASE AND ENDONUCLEASE ZRANB3 FAMILY MEMBER"/>
    <property type="match status" value="1"/>
</dbReference>
<dbReference type="PANTHER" id="PTHR45766:SF6">
    <property type="entry name" value="SWI_SNF-RELATED MATRIX-ASSOCIATED ACTIN-DEPENDENT REGULATOR OF CHROMATIN SUBFAMILY A-LIKE PROTEIN 1"/>
    <property type="match status" value="1"/>
</dbReference>
<dbReference type="Pfam" id="PF00271">
    <property type="entry name" value="Helicase_C"/>
    <property type="match status" value="1"/>
</dbReference>
<dbReference type="Pfam" id="PF12137">
    <property type="entry name" value="RapA_C"/>
    <property type="match status" value="1"/>
</dbReference>
<dbReference type="Pfam" id="PF00176">
    <property type="entry name" value="SNF2-rel_dom"/>
    <property type="match status" value="1"/>
</dbReference>
<dbReference type="Pfam" id="PF18339">
    <property type="entry name" value="Tudor_1_RapA"/>
    <property type="match status" value="1"/>
</dbReference>
<dbReference type="Pfam" id="PF18337">
    <property type="entry name" value="Tudor_RapA"/>
    <property type="match status" value="1"/>
</dbReference>
<dbReference type="SMART" id="SM00487">
    <property type="entry name" value="DEXDc"/>
    <property type="match status" value="1"/>
</dbReference>
<dbReference type="SMART" id="SM00490">
    <property type="entry name" value="HELICc"/>
    <property type="match status" value="1"/>
</dbReference>
<dbReference type="SUPFAM" id="SSF52540">
    <property type="entry name" value="P-loop containing nucleoside triphosphate hydrolases"/>
    <property type="match status" value="2"/>
</dbReference>
<dbReference type="PROSITE" id="PS51192">
    <property type="entry name" value="HELICASE_ATP_BIND_1"/>
    <property type="match status" value="1"/>
</dbReference>
<dbReference type="PROSITE" id="PS51194">
    <property type="entry name" value="HELICASE_CTER"/>
    <property type="match status" value="1"/>
</dbReference>
<evidence type="ECO:0000255" key="1">
    <source>
        <dbReference type="HAMAP-Rule" id="MF_01821"/>
    </source>
</evidence>
<comment type="function">
    <text evidence="1">Transcription regulator that activates transcription by stimulating RNA polymerase (RNAP) recycling in case of stress conditions such as supercoiled DNA or high salt concentrations. Probably acts by releasing the RNAP, when it is trapped or immobilized on tightly supercoiled DNA. Does not activate transcription on linear DNA. Probably not involved in DNA repair.</text>
</comment>
<comment type="subunit">
    <text evidence="1">Interacts with the RNAP. Has a higher affinity for the core RNAP than for the holoenzyme. Its ATPase activity is stimulated by binding to RNAP.</text>
</comment>
<comment type="similarity">
    <text evidence="1">Belongs to the SNF2/RAD54 helicase family. RapA subfamily.</text>
</comment>
<sequence length="968" mass="109769">MPFTLGQRWISDTESELGLGTVVAVDARTVTLLFPSTGENRLYARSDSPVTRVMFNPGDTITSHDGWQMQVEEVKEENGLLTYIGTRLDTEESGVALREVFLDSKLVFSKPQDRLFAGQIDRMDRFALRYRARKYSSEQFRMPYSGLRGQRTSLIPHQLNIAHDVGRRHAPRVLLADEVGLGKTIEAGMILHQQLLSGAAERVLIIVPETLQHQWLVEMLRRFNLRFALFDDERYAEAQHDAYNPFDTEQLVICSLDFARRSKQRLEHLCEAEWDLLVVDEAHHLVWSEDAPSREYQAIEQLAEHVPGVLLLTATPEQLGMESHFARLRLLDPNRFHDFAQFVEEQKNYRPVADAVAMLLAGNKLSNDELNMLGEMIGEQDIEPLLQAANSDSEDAQSARQELVSMLMDRHGTSRVLFRNTRNGVKGFPKRELHTIKLPLPTQYQTAIKVSGIMGARKSAEDRARDMLYPERIYQEFEGDNATWWNFDPRVEWLMGYLTSHRSQKVLVICAKAATALQLEQVLREREGIRAAVFHEGMSIIERDRAAAWFAEEDTGAQVLLCSEIGSEGRNFQFASHMVMFDLPFNPDLLEQRIGRLDRIGQAHDIQIHVPYLEKTAQSVLVRWYHEGLDAFEHTCPTGRTIYDSVYNDLINYLASPDQTEGFDDLIKNCREQHEALKAQLEQGRDRLLEIHSNGGEKAQALAESIEEQDDDTNLIAFAMNLFDIIGINQDDRGDNMIVLTPSDHMLVPDFPGLSEDGITITFDREVALAREDAQFITWEHPLIRNGLDLILSGDTGSSTISLLKNKALPVGTLLVELIYVVEAQAPKQLQLNRFLPPTPVRMLLDKNGNNLAAQVEFETFNRQLNAVNRHTGSKLVNAVQQDVHAILQLGEAQIEKSARALIDAARNEADEKLSAELSRLEALRAVNPNIRDDELTAIESNRQQVMESLDQAGWRLDALRLIVVTHQ</sequence>